<keyword id="KW-0004">4Fe-4S</keyword>
<keyword id="KW-0963">Cytoplasm</keyword>
<keyword id="KW-1015">Disulfide bond</keyword>
<keyword id="KW-0408">Iron</keyword>
<keyword id="KW-0411">Iron-sulfur</keyword>
<keyword id="KW-0479">Metal-binding</keyword>
<keyword id="KW-0489">Methyltransferase</keyword>
<keyword id="KW-0698">rRNA processing</keyword>
<keyword id="KW-0949">S-adenosyl-L-methionine</keyword>
<keyword id="KW-0808">Transferase</keyword>
<keyword id="KW-0819">tRNA processing</keyword>
<accession>B1JT94</accession>
<comment type="function">
    <text evidence="1">Specifically methylates position 2 of adenine 2503 in 23S rRNA and position 2 of adenine 37 in tRNAs. m2A2503 modification seems to play a crucial role in the proofreading step occurring at the peptidyl transferase center and thus would serve to optimize ribosomal fidelity.</text>
</comment>
<comment type="catalytic activity">
    <reaction evidence="1">
        <text>adenosine(2503) in 23S rRNA + 2 reduced [2Fe-2S]-[ferredoxin] + 2 S-adenosyl-L-methionine = 2-methyladenosine(2503) in 23S rRNA + 5'-deoxyadenosine + L-methionine + 2 oxidized [2Fe-2S]-[ferredoxin] + S-adenosyl-L-homocysteine</text>
        <dbReference type="Rhea" id="RHEA:42916"/>
        <dbReference type="Rhea" id="RHEA-COMP:10000"/>
        <dbReference type="Rhea" id="RHEA-COMP:10001"/>
        <dbReference type="Rhea" id="RHEA-COMP:10152"/>
        <dbReference type="Rhea" id="RHEA-COMP:10282"/>
        <dbReference type="ChEBI" id="CHEBI:17319"/>
        <dbReference type="ChEBI" id="CHEBI:33737"/>
        <dbReference type="ChEBI" id="CHEBI:33738"/>
        <dbReference type="ChEBI" id="CHEBI:57844"/>
        <dbReference type="ChEBI" id="CHEBI:57856"/>
        <dbReference type="ChEBI" id="CHEBI:59789"/>
        <dbReference type="ChEBI" id="CHEBI:74411"/>
        <dbReference type="ChEBI" id="CHEBI:74497"/>
        <dbReference type="EC" id="2.1.1.192"/>
    </reaction>
</comment>
<comment type="catalytic activity">
    <reaction evidence="1">
        <text>adenosine(37) in tRNA + 2 reduced [2Fe-2S]-[ferredoxin] + 2 S-adenosyl-L-methionine = 2-methyladenosine(37) in tRNA + 5'-deoxyadenosine + L-methionine + 2 oxidized [2Fe-2S]-[ferredoxin] + S-adenosyl-L-homocysteine</text>
        <dbReference type="Rhea" id="RHEA:43332"/>
        <dbReference type="Rhea" id="RHEA-COMP:10000"/>
        <dbReference type="Rhea" id="RHEA-COMP:10001"/>
        <dbReference type="Rhea" id="RHEA-COMP:10162"/>
        <dbReference type="Rhea" id="RHEA-COMP:10485"/>
        <dbReference type="ChEBI" id="CHEBI:17319"/>
        <dbReference type="ChEBI" id="CHEBI:33737"/>
        <dbReference type="ChEBI" id="CHEBI:33738"/>
        <dbReference type="ChEBI" id="CHEBI:57844"/>
        <dbReference type="ChEBI" id="CHEBI:57856"/>
        <dbReference type="ChEBI" id="CHEBI:59789"/>
        <dbReference type="ChEBI" id="CHEBI:74411"/>
        <dbReference type="ChEBI" id="CHEBI:74497"/>
        <dbReference type="EC" id="2.1.1.192"/>
    </reaction>
</comment>
<comment type="cofactor">
    <cofactor evidence="1">
        <name>[4Fe-4S] cluster</name>
        <dbReference type="ChEBI" id="CHEBI:49883"/>
    </cofactor>
    <text evidence="1">Binds 1 [4Fe-4S] cluster. The cluster is coordinated with 3 cysteines and an exchangeable S-adenosyl-L-methionine.</text>
</comment>
<comment type="subcellular location">
    <subcellularLocation>
        <location evidence="1">Cytoplasm</location>
    </subcellularLocation>
</comment>
<comment type="miscellaneous">
    <text evidence="1">Reaction proceeds by a ping-pong mechanism involving intermediate methylation of a conserved cysteine residue.</text>
</comment>
<comment type="similarity">
    <text evidence="1">Belongs to the radical SAM superfamily. RlmN family.</text>
</comment>
<organism>
    <name type="scientific">Burkholderia orbicola (strain MC0-3)</name>
    <dbReference type="NCBI Taxonomy" id="406425"/>
    <lineage>
        <taxon>Bacteria</taxon>
        <taxon>Pseudomonadati</taxon>
        <taxon>Pseudomonadota</taxon>
        <taxon>Betaproteobacteria</taxon>
        <taxon>Burkholderiales</taxon>
        <taxon>Burkholderiaceae</taxon>
        <taxon>Burkholderia</taxon>
        <taxon>Burkholderia cepacia complex</taxon>
        <taxon>Burkholderia orbicola</taxon>
    </lineage>
</organism>
<gene>
    <name evidence="1" type="primary">rlmN</name>
    <name type="ordered locus">Bcenmc03_1838</name>
</gene>
<sequence>MTSETSVNLLDFDAEGLVAYCGSLGEKPFRAKQLQRWIHQYNAGDFDGMTDLAKSLREKLKGRASIVMPDIASDHVSTDGTRKWLIDVGNGNAVETVFIPEETRGTLCVSSQAGCAVNCRFCSTGKQGFSRNLSTAEIIGQLRMAEFALRASLGRAPGPNGKAERVVTNVVMMGMGEPLLNYSAVVPAMRLMLDDNAYGLSRRRVTLSTSGVVPMMDRLGAELPVALAVSLHAPNDALRDELVPLNKKYPLRELMAACQRYLKVAPRDFITFEYCMLDGVNDTEAHARELLAVTRDVPCKFNLIPFNPFPESGLIRSKPEQIKRFAQVLIDAGVVTTVRKTRGDDIDAACGQLAGAVKDRTRLAERTGAAGKIIEVRAV</sequence>
<feature type="chain" id="PRO_0000350074" description="Dual-specificity RNA methyltransferase RlmN">
    <location>
        <begin position="1"/>
        <end position="379"/>
    </location>
</feature>
<feature type="domain" description="Radical SAM core" evidence="2">
    <location>
        <begin position="101"/>
        <end position="345"/>
    </location>
</feature>
<feature type="active site" description="Proton acceptor" evidence="1">
    <location>
        <position position="95"/>
    </location>
</feature>
<feature type="active site" description="S-methylcysteine intermediate" evidence="1">
    <location>
        <position position="350"/>
    </location>
</feature>
<feature type="binding site" evidence="1">
    <location>
        <position position="115"/>
    </location>
    <ligand>
        <name>[4Fe-4S] cluster</name>
        <dbReference type="ChEBI" id="CHEBI:49883"/>
        <note>4Fe-4S-S-AdoMet</note>
    </ligand>
</feature>
<feature type="binding site" evidence="1">
    <location>
        <position position="119"/>
    </location>
    <ligand>
        <name>[4Fe-4S] cluster</name>
        <dbReference type="ChEBI" id="CHEBI:49883"/>
        <note>4Fe-4S-S-AdoMet</note>
    </ligand>
</feature>
<feature type="binding site" evidence="1">
    <location>
        <position position="122"/>
    </location>
    <ligand>
        <name>[4Fe-4S] cluster</name>
        <dbReference type="ChEBI" id="CHEBI:49883"/>
        <note>4Fe-4S-S-AdoMet</note>
    </ligand>
</feature>
<feature type="binding site" evidence="1">
    <location>
        <begin position="176"/>
        <end position="177"/>
    </location>
    <ligand>
        <name>S-adenosyl-L-methionine</name>
        <dbReference type="ChEBI" id="CHEBI:59789"/>
    </ligand>
</feature>
<feature type="binding site" evidence="1">
    <location>
        <position position="208"/>
    </location>
    <ligand>
        <name>S-adenosyl-L-methionine</name>
        <dbReference type="ChEBI" id="CHEBI:59789"/>
    </ligand>
</feature>
<feature type="binding site" evidence="1">
    <location>
        <begin position="230"/>
        <end position="232"/>
    </location>
    <ligand>
        <name>S-adenosyl-L-methionine</name>
        <dbReference type="ChEBI" id="CHEBI:59789"/>
    </ligand>
</feature>
<feature type="binding site" evidence="1">
    <location>
        <position position="307"/>
    </location>
    <ligand>
        <name>S-adenosyl-L-methionine</name>
        <dbReference type="ChEBI" id="CHEBI:59789"/>
    </ligand>
</feature>
<feature type="disulfide bond" description="(transient)" evidence="1">
    <location>
        <begin position="108"/>
        <end position="350"/>
    </location>
</feature>
<evidence type="ECO:0000255" key="1">
    <source>
        <dbReference type="HAMAP-Rule" id="MF_01849"/>
    </source>
</evidence>
<evidence type="ECO:0000255" key="2">
    <source>
        <dbReference type="PROSITE-ProRule" id="PRU01266"/>
    </source>
</evidence>
<reference key="1">
    <citation type="submission" date="2008-02" db="EMBL/GenBank/DDBJ databases">
        <title>Complete sequence of chromosome 1 of Burkholderia cenocepacia MC0-3.</title>
        <authorList>
            <person name="Copeland A."/>
            <person name="Lucas S."/>
            <person name="Lapidus A."/>
            <person name="Barry K."/>
            <person name="Bruce D."/>
            <person name="Goodwin L."/>
            <person name="Glavina del Rio T."/>
            <person name="Dalin E."/>
            <person name="Tice H."/>
            <person name="Pitluck S."/>
            <person name="Chain P."/>
            <person name="Malfatti S."/>
            <person name="Shin M."/>
            <person name="Vergez L."/>
            <person name="Schmutz J."/>
            <person name="Larimer F."/>
            <person name="Land M."/>
            <person name="Hauser L."/>
            <person name="Kyrpides N."/>
            <person name="Mikhailova N."/>
            <person name="Tiedje J."/>
            <person name="Richardson P."/>
        </authorList>
    </citation>
    <scope>NUCLEOTIDE SEQUENCE [LARGE SCALE GENOMIC DNA]</scope>
    <source>
        <strain>MC0-3</strain>
    </source>
</reference>
<name>RLMN_BURO0</name>
<proteinExistence type="inferred from homology"/>
<dbReference type="EC" id="2.1.1.192" evidence="1"/>
<dbReference type="EMBL" id="CP000958">
    <property type="protein sequence ID" value="ACA90999.1"/>
    <property type="molecule type" value="Genomic_DNA"/>
</dbReference>
<dbReference type="RefSeq" id="WP_011549686.1">
    <property type="nucleotide sequence ID" value="NC_010508.1"/>
</dbReference>
<dbReference type="SMR" id="B1JT94"/>
<dbReference type="GeneID" id="83048611"/>
<dbReference type="KEGG" id="bcm:Bcenmc03_1838"/>
<dbReference type="HOGENOM" id="CLU_029101_0_0_4"/>
<dbReference type="Proteomes" id="UP000002169">
    <property type="component" value="Chromosome 1"/>
</dbReference>
<dbReference type="GO" id="GO:0005737">
    <property type="term" value="C:cytoplasm"/>
    <property type="evidence" value="ECO:0007669"/>
    <property type="project" value="UniProtKB-SubCell"/>
</dbReference>
<dbReference type="GO" id="GO:0051539">
    <property type="term" value="F:4 iron, 4 sulfur cluster binding"/>
    <property type="evidence" value="ECO:0007669"/>
    <property type="project" value="UniProtKB-UniRule"/>
</dbReference>
<dbReference type="GO" id="GO:0046872">
    <property type="term" value="F:metal ion binding"/>
    <property type="evidence" value="ECO:0007669"/>
    <property type="project" value="UniProtKB-KW"/>
</dbReference>
<dbReference type="GO" id="GO:0070040">
    <property type="term" value="F:rRNA (adenine(2503)-C2-)-methyltransferase activity"/>
    <property type="evidence" value="ECO:0007669"/>
    <property type="project" value="UniProtKB-UniRule"/>
</dbReference>
<dbReference type="GO" id="GO:0019843">
    <property type="term" value="F:rRNA binding"/>
    <property type="evidence" value="ECO:0007669"/>
    <property type="project" value="UniProtKB-UniRule"/>
</dbReference>
<dbReference type="GO" id="GO:0002935">
    <property type="term" value="F:tRNA (adenine(37)-C2)-methyltransferase activity"/>
    <property type="evidence" value="ECO:0007669"/>
    <property type="project" value="UniProtKB-UniRule"/>
</dbReference>
<dbReference type="GO" id="GO:0000049">
    <property type="term" value="F:tRNA binding"/>
    <property type="evidence" value="ECO:0007669"/>
    <property type="project" value="UniProtKB-UniRule"/>
</dbReference>
<dbReference type="GO" id="GO:0070475">
    <property type="term" value="P:rRNA base methylation"/>
    <property type="evidence" value="ECO:0007669"/>
    <property type="project" value="UniProtKB-UniRule"/>
</dbReference>
<dbReference type="GO" id="GO:0030488">
    <property type="term" value="P:tRNA methylation"/>
    <property type="evidence" value="ECO:0007669"/>
    <property type="project" value="UniProtKB-UniRule"/>
</dbReference>
<dbReference type="CDD" id="cd01335">
    <property type="entry name" value="Radical_SAM"/>
    <property type="match status" value="1"/>
</dbReference>
<dbReference type="FunFam" id="1.10.150.530:FF:000003">
    <property type="entry name" value="Dual-specificity RNA methyltransferase RlmN"/>
    <property type="match status" value="1"/>
</dbReference>
<dbReference type="FunFam" id="3.20.20.70:FF:000008">
    <property type="entry name" value="Dual-specificity RNA methyltransferase RlmN"/>
    <property type="match status" value="1"/>
</dbReference>
<dbReference type="Gene3D" id="1.10.150.530">
    <property type="match status" value="1"/>
</dbReference>
<dbReference type="Gene3D" id="3.20.20.70">
    <property type="entry name" value="Aldolase class I"/>
    <property type="match status" value="1"/>
</dbReference>
<dbReference type="HAMAP" id="MF_01849">
    <property type="entry name" value="RNA_methyltr_RlmN"/>
    <property type="match status" value="1"/>
</dbReference>
<dbReference type="InterPro" id="IPR013785">
    <property type="entry name" value="Aldolase_TIM"/>
</dbReference>
<dbReference type="InterPro" id="IPR040072">
    <property type="entry name" value="Methyltransferase_A"/>
</dbReference>
<dbReference type="InterPro" id="IPR048641">
    <property type="entry name" value="RlmN_N"/>
</dbReference>
<dbReference type="InterPro" id="IPR027492">
    <property type="entry name" value="RNA_MTrfase_RlmN"/>
</dbReference>
<dbReference type="InterPro" id="IPR004383">
    <property type="entry name" value="rRNA_lsu_MTrfase_RlmN/Cfr"/>
</dbReference>
<dbReference type="InterPro" id="IPR007197">
    <property type="entry name" value="rSAM"/>
</dbReference>
<dbReference type="NCBIfam" id="TIGR00048">
    <property type="entry name" value="rRNA_mod_RlmN"/>
    <property type="match status" value="1"/>
</dbReference>
<dbReference type="PANTHER" id="PTHR30544">
    <property type="entry name" value="23S RRNA METHYLTRANSFERASE"/>
    <property type="match status" value="1"/>
</dbReference>
<dbReference type="PANTHER" id="PTHR30544:SF5">
    <property type="entry name" value="RADICAL SAM CORE DOMAIN-CONTAINING PROTEIN"/>
    <property type="match status" value="1"/>
</dbReference>
<dbReference type="Pfam" id="PF04055">
    <property type="entry name" value="Radical_SAM"/>
    <property type="match status" value="1"/>
</dbReference>
<dbReference type="Pfam" id="PF21016">
    <property type="entry name" value="RlmN_N"/>
    <property type="match status" value="1"/>
</dbReference>
<dbReference type="PIRSF" id="PIRSF006004">
    <property type="entry name" value="CHP00048"/>
    <property type="match status" value="1"/>
</dbReference>
<dbReference type="SFLD" id="SFLDF00275">
    <property type="entry name" value="adenosine_C2_methyltransferase"/>
    <property type="match status" value="1"/>
</dbReference>
<dbReference type="SFLD" id="SFLDS00029">
    <property type="entry name" value="Radical_SAM"/>
    <property type="match status" value="1"/>
</dbReference>
<dbReference type="SUPFAM" id="SSF102114">
    <property type="entry name" value="Radical SAM enzymes"/>
    <property type="match status" value="1"/>
</dbReference>
<dbReference type="PROSITE" id="PS51918">
    <property type="entry name" value="RADICAL_SAM"/>
    <property type="match status" value="1"/>
</dbReference>
<protein>
    <recommendedName>
        <fullName evidence="1">Dual-specificity RNA methyltransferase RlmN</fullName>
        <ecNumber evidence="1">2.1.1.192</ecNumber>
    </recommendedName>
    <alternativeName>
        <fullName evidence="1">23S rRNA (adenine(2503)-C(2))-methyltransferase</fullName>
    </alternativeName>
    <alternativeName>
        <fullName evidence="1">23S rRNA m2A2503 methyltransferase</fullName>
    </alternativeName>
    <alternativeName>
        <fullName evidence="1">Ribosomal RNA large subunit methyltransferase N</fullName>
    </alternativeName>
    <alternativeName>
        <fullName evidence="1">tRNA (adenine(37)-C(2))-methyltransferase</fullName>
    </alternativeName>
    <alternativeName>
        <fullName evidence="1">tRNA m2A37 methyltransferase</fullName>
    </alternativeName>
</protein>